<proteinExistence type="inferred from homology"/>
<name>BIOA_MYCLE</name>
<evidence type="ECO:0000255" key="1">
    <source>
        <dbReference type="HAMAP-Rule" id="MF_00834"/>
    </source>
</evidence>
<gene>
    <name evidence="1" type="primary">bioA</name>
    <name type="ordered locus">ML1216</name>
    <name type="ORF">B1170_C2_195</name>
</gene>
<feature type="chain" id="PRO_0000120373" description="Adenosylmethionine-8-amino-7-oxononanoate aminotransferase">
    <location>
        <begin position="1"/>
        <end position="436"/>
    </location>
</feature>
<feature type="binding site" evidence="1">
    <location>
        <position position="66"/>
    </location>
    <ligand>
        <name>substrate</name>
    </ligand>
</feature>
<feature type="binding site" evidence="1">
    <location>
        <begin position="126"/>
        <end position="127"/>
    </location>
    <ligand>
        <name>pyridoxal 5'-phosphate</name>
        <dbReference type="ChEBI" id="CHEBI:597326"/>
    </ligand>
</feature>
<feature type="binding site" evidence="1">
    <location>
        <position position="159"/>
    </location>
    <ligand>
        <name>substrate</name>
    </ligand>
</feature>
<feature type="binding site" evidence="1">
    <location>
        <position position="256"/>
    </location>
    <ligand>
        <name>pyridoxal 5'-phosphate</name>
        <dbReference type="ChEBI" id="CHEBI:597326"/>
    </ligand>
</feature>
<feature type="binding site" evidence="1">
    <location>
        <position position="285"/>
    </location>
    <ligand>
        <name>substrate</name>
    </ligand>
</feature>
<feature type="binding site" evidence="1">
    <location>
        <position position="318"/>
    </location>
    <ligand>
        <name>substrate</name>
    </ligand>
</feature>
<feature type="binding site" evidence="1">
    <location>
        <begin position="319"/>
        <end position="320"/>
    </location>
    <ligand>
        <name>pyridoxal 5'-phosphate</name>
        <dbReference type="ChEBI" id="CHEBI:597326"/>
    </ligand>
</feature>
<feature type="binding site" evidence="1">
    <location>
        <position position="402"/>
    </location>
    <ligand>
        <name>substrate</name>
    </ligand>
</feature>
<feature type="site" description="Participates in the substrate recognition with KAPA and in a stacking interaction with the adenine ring of SAM" evidence="1">
    <location>
        <position position="25"/>
    </location>
</feature>
<feature type="modified residue" description="N6-(pyridoxal phosphate)lysine" evidence="1">
    <location>
        <position position="285"/>
    </location>
</feature>
<reference key="1">
    <citation type="submission" date="1994-03" db="EMBL/GenBank/DDBJ databases">
        <authorList>
            <person name="Smith D.R."/>
            <person name="Robison K."/>
        </authorList>
    </citation>
    <scope>NUCLEOTIDE SEQUENCE [GENOMIC DNA]</scope>
</reference>
<reference key="2">
    <citation type="journal article" date="2001" name="Nature">
        <title>Massive gene decay in the leprosy bacillus.</title>
        <authorList>
            <person name="Cole S.T."/>
            <person name="Eiglmeier K."/>
            <person name="Parkhill J."/>
            <person name="James K.D."/>
            <person name="Thomson N.R."/>
            <person name="Wheeler P.R."/>
            <person name="Honore N."/>
            <person name="Garnier T."/>
            <person name="Churcher C.M."/>
            <person name="Harris D.E."/>
            <person name="Mungall K.L."/>
            <person name="Basham D."/>
            <person name="Brown D."/>
            <person name="Chillingworth T."/>
            <person name="Connor R."/>
            <person name="Davies R.M."/>
            <person name="Devlin K."/>
            <person name="Duthoy S."/>
            <person name="Feltwell T."/>
            <person name="Fraser A."/>
            <person name="Hamlin N."/>
            <person name="Holroyd S."/>
            <person name="Hornsby T."/>
            <person name="Jagels K."/>
            <person name="Lacroix C."/>
            <person name="Maclean J."/>
            <person name="Moule S."/>
            <person name="Murphy L.D."/>
            <person name="Oliver K."/>
            <person name="Quail M.A."/>
            <person name="Rajandream M.A."/>
            <person name="Rutherford K.M."/>
            <person name="Rutter S."/>
            <person name="Seeger K."/>
            <person name="Simon S."/>
            <person name="Simmonds M."/>
            <person name="Skelton J."/>
            <person name="Squares R."/>
            <person name="Squares S."/>
            <person name="Stevens K."/>
            <person name="Taylor K."/>
            <person name="Whitehead S."/>
            <person name="Woodward J.R."/>
            <person name="Barrell B.G."/>
        </authorList>
    </citation>
    <scope>NUCLEOTIDE SEQUENCE [LARGE SCALE GENOMIC DNA]</scope>
    <source>
        <strain>TN</strain>
    </source>
</reference>
<dbReference type="EC" id="2.6.1.62" evidence="1"/>
<dbReference type="EMBL" id="U00010">
    <property type="protein sequence ID" value="AAA17065.1"/>
    <property type="molecule type" value="Genomic_DNA"/>
</dbReference>
<dbReference type="EMBL" id="AL583921">
    <property type="protein sequence ID" value="CAC31597.1"/>
    <property type="molecule type" value="Genomic_DNA"/>
</dbReference>
<dbReference type="PIR" id="S72701">
    <property type="entry name" value="S72701"/>
</dbReference>
<dbReference type="RefSeq" id="NP_301880.1">
    <property type="nucleotide sequence ID" value="NC_002677.1"/>
</dbReference>
<dbReference type="RefSeq" id="WP_010908201.1">
    <property type="nucleotide sequence ID" value="NC_002677.1"/>
</dbReference>
<dbReference type="SMR" id="P45488"/>
<dbReference type="STRING" id="272631.gene:17575047"/>
<dbReference type="KEGG" id="mle:ML1216"/>
<dbReference type="PATRIC" id="fig|272631.5.peg.2235"/>
<dbReference type="Leproma" id="ML1216"/>
<dbReference type="eggNOG" id="COG0161">
    <property type="taxonomic scope" value="Bacteria"/>
</dbReference>
<dbReference type="HOGENOM" id="CLU_016922_4_3_11"/>
<dbReference type="OrthoDB" id="9801052at2"/>
<dbReference type="UniPathway" id="UPA00078">
    <property type="reaction ID" value="UER00160"/>
</dbReference>
<dbReference type="Proteomes" id="UP000000806">
    <property type="component" value="Chromosome"/>
</dbReference>
<dbReference type="GO" id="GO:0005737">
    <property type="term" value="C:cytoplasm"/>
    <property type="evidence" value="ECO:0007669"/>
    <property type="project" value="UniProtKB-SubCell"/>
</dbReference>
<dbReference type="GO" id="GO:0004015">
    <property type="term" value="F:adenosylmethionine-8-amino-7-oxononanoate transaminase activity"/>
    <property type="evidence" value="ECO:0007669"/>
    <property type="project" value="UniProtKB-UniRule"/>
</dbReference>
<dbReference type="GO" id="GO:0030170">
    <property type="term" value="F:pyridoxal phosphate binding"/>
    <property type="evidence" value="ECO:0007669"/>
    <property type="project" value="UniProtKB-UniRule"/>
</dbReference>
<dbReference type="GO" id="GO:0009102">
    <property type="term" value="P:biotin biosynthetic process"/>
    <property type="evidence" value="ECO:0007669"/>
    <property type="project" value="UniProtKB-UniRule"/>
</dbReference>
<dbReference type="CDD" id="cd00610">
    <property type="entry name" value="OAT_like"/>
    <property type="match status" value="1"/>
</dbReference>
<dbReference type="FunFam" id="3.40.640.10:FF:000041">
    <property type="entry name" value="Adenosylmethionine-8-amino-7-oxononanoate aminotransferase"/>
    <property type="match status" value="1"/>
</dbReference>
<dbReference type="Gene3D" id="3.90.1150.10">
    <property type="entry name" value="Aspartate Aminotransferase, domain 1"/>
    <property type="match status" value="1"/>
</dbReference>
<dbReference type="Gene3D" id="3.40.640.10">
    <property type="entry name" value="Type I PLP-dependent aspartate aminotransferase-like (Major domain)"/>
    <property type="match status" value="1"/>
</dbReference>
<dbReference type="HAMAP" id="MF_00834">
    <property type="entry name" value="BioA"/>
    <property type="match status" value="1"/>
</dbReference>
<dbReference type="InterPro" id="IPR005814">
    <property type="entry name" value="Aminotrans_3"/>
</dbReference>
<dbReference type="InterPro" id="IPR049704">
    <property type="entry name" value="Aminotrans_3_PPA_site"/>
</dbReference>
<dbReference type="InterPro" id="IPR005815">
    <property type="entry name" value="BioA"/>
</dbReference>
<dbReference type="InterPro" id="IPR015424">
    <property type="entry name" value="PyrdxlP-dep_Trfase"/>
</dbReference>
<dbReference type="InterPro" id="IPR015421">
    <property type="entry name" value="PyrdxlP-dep_Trfase_major"/>
</dbReference>
<dbReference type="InterPro" id="IPR015422">
    <property type="entry name" value="PyrdxlP-dep_Trfase_small"/>
</dbReference>
<dbReference type="NCBIfam" id="TIGR00508">
    <property type="entry name" value="bioA"/>
    <property type="match status" value="1"/>
</dbReference>
<dbReference type="NCBIfam" id="NF004624">
    <property type="entry name" value="PRK05964.1"/>
    <property type="match status" value="1"/>
</dbReference>
<dbReference type="PANTHER" id="PTHR42684">
    <property type="entry name" value="ADENOSYLMETHIONINE-8-AMINO-7-OXONONANOATE AMINOTRANSFERASE"/>
    <property type="match status" value="1"/>
</dbReference>
<dbReference type="PANTHER" id="PTHR42684:SF17">
    <property type="entry name" value="ADENOSYLMETHIONINE-8-AMINO-7-OXONONANOATE AMINOTRANSFERASE"/>
    <property type="match status" value="1"/>
</dbReference>
<dbReference type="Pfam" id="PF00202">
    <property type="entry name" value="Aminotran_3"/>
    <property type="match status" value="1"/>
</dbReference>
<dbReference type="SUPFAM" id="SSF53383">
    <property type="entry name" value="PLP-dependent transferases"/>
    <property type="match status" value="1"/>
</dbReference>
<dbReference type="PROSITE" id="PS00600">
    <property type="entry name" value="AA_TRANSFER_CLASS_3"/>
    <property type="match status" value="1"/>
</dbReference>
<organism>
    <name type="scientific">Mycobacterium leprae (strain TN)</name>
    <dbReference type="NCBI Taxonomy" id="272631"/>
    <lineage>
        <taxon>Bacteria</taxon>
        <taxon>Bacillati</taxon>
        <taxon>Actinomycetota</taxon>
        <taxon>Actinomycetes</taxon>
        <taxon>Mycobacteriales</taxon>
        <taxon>Mycobacteriaceae</taxon>
        <taxon>Mycobacterium</taxon>
    </lineage>
</organism>
<comment type="function">
    <text evidence="1">Catalyzes the transfer of the alpha-amino group from S-adenosyl-L-methionine (SAM) to 7-keto-8-aminopelargonic acid (KAPA) to form 7,8-diaminopelargonic acid (DAPA). It is the only aminotransferase known to utilize SAM as an amino donor.</text>
</comment>
<comment type="catalytic activity">
    <reaction evidence="1">
        <text>(8S)-8-amino-7-oxononanoate + S-adenosyl-L-methionine = S-adenosyl-4-methylsulfanyl-2-oxobutanoate + (7R,8S)-7,8-diammoniononanoate</text>
        <dbReference type="Rhea" id="RHEA:16861"/>
        <dbReference type="ChEBI" id="CHEBI:16490"/>
        <dbReference type="ChEBI" id="CHEBI:59789"/>
        <dbReference type="ChEBI" id="CHEBI:149468"/>
        <dbReference type="ChEBI" id="CHEBI:149469"/>
        <dbReference type="EC" id="2.6.1.62"/>
    </reaction>
</comment>
<comment type="cofactor">
    <cofactor evidence="1">
        <name>pyridoxal 5'-phosphate</name>
        <dbReference type="ChEBI" id="CHEBI:597326"/>
    </cofactor>
</comment>
<comment type="pathway">
    <text evidence="1">Cofactor biosynthesis; biotin biosynthesis; 7,8-diaminononanoate from 8-amino-7-oxononanoate (SAM route): step 1/1.</text>
</comment>
<comment type="subunit">
    <text evidence="1">Homodimer.</text>
</comment>
<comment type="subcellular location">
    <subcellularLocation>
        <location evidence="1">Cytoplasm</location>
    </subcellularLocation>
</comment>
<comment type="similarity">
    <text evidence="1">Belongs to the class-III pyridoxal-phosphate-dependent aminotransferase family. BioA subfamily.</text>
</comment>
<keyword id="KW-0032">Aminotransferase</keyword>
<keyword id="KW-0093">Biotin biosynthesis</keyword>
<keyword id="KW-0963">Cytoplasm</keyword>
<keyword id="KW-0663">Pyridoxal phosphate</keyword>
<keyword id="KW-1185">Reference proteome</keyword>
<keyword id="KW-0949">S-adenosyl-L-methionine</keyword>
<keyword id="KW-0808">Transferase</keyword>
<sequence length="436" mass="46111">MSGATSGLTPEQIGAIDAAHLWHPYSTIGAATGVIPPVVAVAAHGAWLTLIRDGKPIEALDAMSSWWTAIHGHGHSVLDAALTTQLGAMNHVMFGGLTHEPAARLAQLLVDITPAGLETVFFSDSGSVSVQVAVKMALQYWRSRGQPAKRRLMTWRGGYHGDTLTPMSICDPDGGMHSLWTDILARQVFAPQVPRDYDPAYSKAFETQLAQHTPELAAVVVEPVVQGAGGMRFHDPRYLCDVRDICRRHDVLLIFDEIATGFGRTGELFAADHCGVSPDIMCVGKALTGGYLSLAATLCTTDIAHAISVGAAGALMHGPTFMANPLACAVSVASVEVLLGQDWRSRVAEISAGLTAGLEAAQGLPGVIDVRVCGAIGVIECDRSVDLAVATPAALDRRVWLRPFRNLVYAMPPYICPPAEIAQITSAMVEVAGLVG</sequence>
<protein>
    <recommendedName>
        <fullName evidence="1">Adenosylmethionine-8-amino-7-oxononanoate aminotransferase</fullName>
        <ecNumber evidence="1">2.6.1.62</ecNumber>
    </recommendedName>
    <alternativeName>
        <fullName evidence="1">7,8-diamino-pelargonic acid aminotransferase</fullName>
        <shortName evidence="1">DAPA AT</shortName>
        <shortName evidence="1">DAPA aminotransferase</shortName>
    </alternativeName>
    <alternativeName>
        <fullName evidence="1">7,8-diaminononanoate synthase</fullName>
        <shortName evidence="1">DANS</shortName>
    </alternativeName>
    <alternativeName>
        <fullName evidence="1">Diaminopelargonic acid synthase</fullName>
    </alternativeName>
</protein>
<accession>P45488</accession>